<dbReference type="EMBL" id="AL591688">
    <property type="protein sequence ID" value="CAC45953.1"/>
    <property type="molecule type" value="Genomic_DNA"/>
</dbReference>
<dbReference type="RefSeq" id="NP_385480.1">
    <property type="nucleotide sequence ID" value="NC_003047.1"/>
</dbReference>
<dbReference type="RefSeq" id="WP_003536508.1">
    <property type="nucleotide sequence ID" value="NC_003047.1"/>
</dbReference>
<dbReference type="SMR" id="Q92QF2"/>
<dbReference type="EnsemblBacteria" id="CAC45953">
    <property type="protein sequence ID" value="CAC45953"/>
    <property type="gene ID" value="SMc01291"/>
</dbReference>
<dbReference type="GeneID" id="89575698"/>
<dbReference type="KEGG" id="sme:SMc01291"/>
<dbReference type="PATRIC" id="fig|266834.11.peg.2790"/>
<dbReference type="eggNOG" id="COG1841">
    <property type="taxonomic scope" value="Bacteria"/>
</dbReference>
<dbReference type="HOGENOM" id="CLU_131047_1_2_5"/>
<dbReference type="OrthoDB" id="9812790at2"/>
<dbReference type="Proteomes" id="UP000001976">
    <property type="component" value="Chromosome"/>
</dbReference>
<dbReference type="GO" id="GO:0022625">
    <property type="term" value="C:cytosolic large ribosomal subunit"/>
    <property type="evidence" value="ECO:0007669"/>
    <property type="project" value="TreeGrafter"/>
</dbReference>
<dbReference type="GO" id="GO:0003735">
    <property type="term" value="F:structural constituent of ribosome"/>
    <property type="evidence" value="ECO:0007669"/>
    <property type="project" value="InterPro"/>
</dbReference>
<dbReference type="GO" id="GO:0006412">
    <property type="term" value="P:translation"/>
    <property type="evidence" value="ECO:0007669"/>
    <property type="project" value="UniProtKB-UniRule"/>
</dbReference>
<dbReference type="CDD" id="cd01658">
    <property type="entry name" value="Ribosomal_L30"/>
    <property type="match status" value="1"/>
</dbReference>
<dbReference type="Gene3D" id="3.30.1390.20">
    <property type="entry name" value="Ribosomal protein L30, ferredoxin-like fold domain"/>
    <property type="match status" value="1"/>
</dbReference>
<dbReference type="HAMAP" id="MF_01371_B">
    <property type="entry name" value="Ribosomal_uL30_B"/>
    <property type="match status" value="1"/>
</dbReference>
<dbReference type="InterPro" id="IPR036919">
    <property type="entry name" value="Ribo_uL30_ferredoxin-like_sf"/>
</dbReference>
<dbReference type="InterPro" id="IPR005996">
    <property type="entry name" value="Ribosomal_uL30_bac-type"/>
</dbReference>
<dbReference type="InterPro" id="IPR016082">
    <property type="entry name" value="Ribosomal_uL30_ferredoxin-like"/>
</dbReference>
<dbReference type="NCBIfam" id="TIGR01308">
    <property type="entry name" value="rpmD_bact"/>
    <property type="match status" value="1"/>
</dbReference>
<dbReference type="PANTHER" id="PTHR15892:SF2">
    <property type="entry name" value="LARGE RIBOSOMAL SUBUNIT PROTEIN UL30M"/>
    <property type="match status" value="1"/>
</dbReference>
<dbReference type="PANTHER" id="PTHR15892">
    <property type="entry name" value="MITOCHONDRIAL RIBOSOMAL PROTEIN L30"/>
    <property type="match status" value="1"/>
</dbReference>
<dbReference type="Pfam" id="PF00327">
    <property type="entry name" value="Ribosomal_L30"/>
    <property type="match status" value="1"/>
</dbReference>
<dbReference type="PIRSF" id="PIRSF002211">
    <property type="entry name" value="Ribosomal_L30_bac-type"/>
    <property type="match status" value="1"/>
</dbReference>
<dbReference type="SUPFAM" id="SSF55129">
    <property type="entry name" value="Ribosomal protein L30p/L7e"/>
    <property type="match status" value="1"/>
</dbReference>
<name>RL30_RHIME</name>
<gene>
    <name evidence="1" type="primary">rpmD</name>
    <name type="ordered locus">R01374</name>
    <name type="ORF">SMc01291</name>
</gene>
<sequence length="67" mass="7541">MAKKEVAKKTVTVEQIGSPIRRPAVQRQTLVGLGLNKMHRVRTLEDTPAVRGMIRAVQHLVRVVDEK</sequence>
<keyword id="KW-1185">Reference proteome</keyword>
<keyword id="KW-0687">Ribonucleoprotein</keyword>
<keyword id="KW-0689">Ribosomal protein</keyword>
<organism>
    <name type="scientific">Rhizobium meliloti (strain 1021)</name>
    <name type="common">Ensifer meliloti</name>
    <name type="synonym">Sinorhizobium meliloti</name>
    <dbReference type="NCBI Taxonomy" id="266834"/>
    <lineage>
        <taxon>Bacteria</taxon>
        <taxon>Pseudomonadati</taxon>
        <taxon>Pseudomonadota</taxon>
        <taxon>Alphaproteobacteria</taxon>
        <taxon>Hyphomicrobiales</taxon>
        <taxon>Rhizobiaceae</taxon>
        <taxon>Sinorhizobium/Ensifer group</taxon>
        <taxon>Sinorhizobium</taxon>
    </lineage>
</organism>
<protein>
    <recommendedName>
        <fullName evidence="1">Large ribosomal subunit protein uL30</fullName>
    </recommendedName>
    <alternativeName>
        <fullName evidence="2">50S ribosomal protein L30</fullName>
    </alternativeName>
</protein>
<proteinExistence type="inferred from homology"/>
<comment type="subunit">
    <text evidence="1">Part of the 50S ribosomal subunit.</text>
</comment>
<comment type="similarity">
    <text evidence="1">Belongs to the universal ribosomal protein uL30 family.</text>
</comment>
<reference key="1">
    <citation type="journal article" date="2001" name="Proc. Natl. Acad. Sci. U.S.A.">
        <title>Analysis of the chromosome sequence of the legume symbiont Sinorhizobium meliloti strain 1021.</title>
        <authorList>
            <person name="Capela D."/>
            <person name="Barloy-Hubler F."/>
            <person name="Gouzy J."/>
            <person name="Bothe G."/>
            <person name="Ampe F."/>
            <person name="Batut J."/>
            <person name="Boistard P."/>
            <person name="Becker A."/>
            <person name="Boutry M."/>
            <person name="Cadieu E."/>
            <person name="Dreano S."/>
            <person name="Gloux S."/>
            <person name="Godrie T."/>
            <person name="Goffeau A."/>
            <person name="Kahn D."/>
            <person name="Kiss E."/>
            <person name="Lelaure V."/>
            <person name="Masuy D."/>
            <person name="Pohl T."/>
            <person name="Portetelle D."/>
            <person name="Puehler A."/>
            <person name="Purnelle B."/>
            <person name="Ramsperger U."/>
            <person name="Renard C."/>
            <person name="Thebault P."/>
            <person name="Vandenbol M."/>
            <person name="Weidner S."/>
            <person name="Galibert F."/>
        </authorList>
    </citation>
    <scope>NUCLEOTIDE SEQUENCE [LARGE SCALE GENOMIC DNA]</scope>
    <source>
        <strain>1021</strain>
    </source>
</reference>
<reference key="2">
    <citation type="journal article" date="2001" name="Science">
        <title>The composite genome of the legume symbiont Sinorhizobium meliloti.</title>
        <authorList>
            <person name="Galibert F."/>
            <person name="Finan T.M."/>
            <person name="Long S.R."/>
            <person name="Puehler A."/>
            <person name="Abola P."/>
            <person name="Ampe F."/>
            <person name="Barloy-Hubler F."/>
            <person name="Barnett M.J."/>
            <person name="Becker A."/>
            <person name="Boistard P."/>
            <person name="Bothe G."/>
            <person name="Boutry M."/>
            <person name="Bowser L."/>
            <person name="Buhrmester J."/>
            <person name="Cadieu E."/>
            <person name="Capela D."/>
            <person name="Chain P."/>
            <person name="Cowie A."/>
            <person name="Davis R.W."/>
            <person name="Dreano S."/>
            <person name="Federspiel N.A."/>
            <person name="Fisher R.F."/>
            <person name="Gloux S."/>
            <person name="Godrie T."/>
            <person name="Goffeau A."/>
            <person name="Golding B."/>
            <person name="Gouzy J."/>
            <person name="Gurjal M."/>
            <person name="Hernandez-Lucas I."/>
            <person name="Hong A."/>
            <person name="Huizar L."/>
            <person name="Hyman R.W."/>
            <person name="Jones T."/>
            <person name="Kahn D."/>
            <person name="Kahn M.L."/>
            <person name="Kalman S."/>
            <person name="Keating D.H."/>
            <person name="Kiss E."/>
            <person name="Komp C."/>
            <person name="Lelaure V."/>
            <person name="Masuy D."/>
            <person name="Palm C."/>
            <person name="Peck M.C."/>
            <person name="Pohl T.M."/>
            <person name="Portetelle D."/>
            <person name="Purnelle B."/>
            <person name="Ramsperger U."/>
            <person name="Surzycki R."/>
            <person name="Thebault P."/>
            <person name="Vandenbol M."/>
            <person name="Vorhoelter F.J."/>
            <person name="Weidner S."/>
            <person name="Wells D.H."/>
            <person name="Wong K."/>
            <person name="Yeh K.-C."/>
            <person name="Batut J."/>
        </authorList>
    </citation>
    <scope>NUCLEOTIDE SEQUENCE [LARGE SCALE GENOMIC DNA]</scope>
    <source>
        <strain>1021</strain>
    </source>
</reference>
<feature type="chain" id="PRO_0000347137" description="Large ribosomal subunit protein uL30">
    <location>
        <begin position="1"/>
        <end position="67"/>
    </location>
</feature>
<evidence type="ECO:0000255" key="1">
    <source>
        <dbReference type="HAMAP-Rule" id="MF_01371"/>
    </source>
</evidence>
<evidence type="ECO:0000305" key="2"/>
<accession>Q92QF2</accession>